<feature type="transit peptide" description="Chloroplast" evidence="1">
    <location>
        <begin position="1"/>
        <end position="61"/>
    </location>
</feature>
<feature type="chain" id="PRO_0000030511" description="Large ribosomal subunit protein uL29c">
    <location>
        <begin position="62"/>
        <end position="161"/>
    </location>
</feature>
<dbReference type="EMBL" id="AF147725">
    <property type="protein sequence ID" value="AAD50383.1"/>
    <property type="molecule type" value="mRNA"/>
</dbReference>
<dbReference type="RefSeq" id="NP_001104944.1">
    <property type="nucleotide sequence ID" value="NM_001111474.1"/>
</dbReference>
<dbReference type="SMR" id="Q9SWI6"/>
<dbReference type="FunCoup" id="Q9SWI6">
    <property type="interactions" value="2071"/>
</dbReference>
<dbReference type="STRING" id="4577.Q9SWI6"/>
<dbReference type="PaxDb" id="4577-GRMZM2G028216_P01"/>
<dbReference type="EnsemblPlants" id="Zm00001eb194130_T001">
    <property type="protein sequence ID" value="Zm00001eb194130_P001"/>
    <property type="gene ID" value="Zm00001eb194130"/>
</dbReference>
<dbReference type="Gramene" id="Zm00001eb194130_T001">
    <property type="protein sequence ID" value="Zm00001eb194130_P001"/>
    <property type="gene ID" value="Zm00001eb194130"/>
</dbReference>
<dbReference type="MaizeGDB" id="231181"/>
<dbReference type="eggNOG" id="KOG3436">
    <property type="taxonomic scope" value="Eukaryota"/>
</dbReference>
<dbReference type="HOGENOM" id="CLU_110022_1_1_1"/>
<dbReference type="InParanoid" id="Q9SWI6"/>
<dbReference type="OMA" id="GIRIQHV"/>
<dbReference type="OrthoDB" id="528635at2759"/>
<dbReference type="Proteomes" id="UP000007305">
    <property type="component" value="Chromosome 4"/>
</dbReference>
<dbReference type="ExpressionAtlas" id="Q9SWI6">
    <property type="expression patterns" value="baseline and differential"/>
</dbReference>
<dbReference type="GO" id="GO:0009507">
    <property type="term" value="C:chloroplast"/>
    <property type="evidence" value="ECO:0007669"/>
    <property type="project" value="UniProtKB-SubCell"/>
</dbReference>
<dbReference type="GO" id="GO:1990904">
    <property type="term" value="C:ribonucleoprotein complex"/>
    <property type="evidence" value="ECO:0007669"/>
    <property type="project" value="UniProtKB-KW"/>
</dbReference>
<dbReference type="GO" id="GO:0005840">
    <property type="term" value="C:ribosome"/>
    <property type="evidence" value="ECO:0007669"/>
    <property type="project" value="UniProtKB-KW"/>
</dbReference>
<dbReference type="GO" id="GO:0003735">
    <property type="term" value="F:structural constituent of ribosome"/>
    <property type="evidence" value="ECO:0007669"/>
    <property type="project" value="InterPro"/>
</dbReference>
<dbReference type="GO" id="GO:0006412">
    <property type="term" value="P:translation"/>
    <property type="evidence" value="ECO:0007669"/>
    <property type="project" value="InterPro"/>
</dbReference>
<dbReference type="CDD" id="cd00427">
    <property type="entry name" value="Ribosomal_L29_HIP"/>
    <property type="match status" value="1"/>
</dbReference>
<dbReference type="FunFam" id="1.10.287.310:FF:000004">
    <property type="entry name" value="50S ribosomal protein L29, chloroplastic"/>
    <property type="match status" value="1"/>
</dbReference>
<dbReference type="Gene3D" id="1.10.287.310">
    <property type="match status" value="1"/>
</dbReference>
<dbReference type="HAMAP" id="MF_00374">
    <property type="entry name" value="Ribosomal_uL29"/>
    <property type="match status" value="1"/>
</dbReference>
<dbReference type="InterPro" id="IPR050063">
    <property type="entry name" value="Ribosomal_protein_uL29"/>
</dbReference>
<dbReference type="InterPro" id="IPR001854">
    <property type="entry name" value="Ribosomal_uL29"/>
</dbReference>
<dbReference type="InterPro" id="IPR036049">
    <property type="entry name" value="Ribosomal_uL29_sf"/>
</dbReference>
<dbReference type="NCBIfam" id="TIGR00012">
    <property type="entry name" value="L29"/>
    <property type="match status" value="1"/>
</dbReference>
<dbReference type="PANTHER" id="PTHR10916">
    <property type="entry name" value="60S RIBOSOMAL PROTEIN L35/50S RIBOSOMAL PROTEIN L29"/>
    <property type="match status" value="1"/>
</dbReference>
<dbReference type="PANTHER" id="PTHR10916:SF0">
    <property type="entry name" value="LARGE RIBOSOMAL SUBUNIT PROTEIN UL29C"/>
    <property type="match status" value="1"/>
</dbReference>
<dbReference type="Pfam" id="PF00831">
    <property type="entry name" value="Ribosomal_L29"/>
    <property type="match status" value="1"/>
</dbReference>
<dbReference type="SUPFAM" id="SSF46561">
    <property type="entry name" value="Ribosomal protein L29 (L29p)"/>
    <property type="match status" value="1"/>
</dbReference>
<name>RK29_MAIZE</name>
<evidence type="ECO:0000250" key="1"/>
<evidence type="ECO:0000305" key="2"/>
<accession>Q9SWI6</accession>
<reference key="1">
    <citation type="journal article" date="1999" name="Proc. Natl. Acad. Sci. U.S.A.">
        <title>Subpopulations of chloroplast ribosomes change during photoregulated development of Zea mays leaves: ribosomal proteins L2, L21, and L29.</title>
        <authorList>
            <person name="Zhao Y.-Y."/>
            <person name="Xu T."/>
            <person name="Zucchi P."/>
            <person name="Bogorad L."/>
        </authorList>
    </citation>
    <scope>NUCLEOTIDE SEQUENCE [MRNA]</scope>
    <scope>EXPRESSION DURING GREENING</scope>
    <source>
        <strain>cv. FR9cms X FR37</strain>
        <tissue>Bundle sheath cell</tissue>
        <tissue>Etiolated seedling</tissue>
        <tissue>Mesophyll cell</tissue>
    </source>
</reference>
<protein>
    <recommendedName>
        <fullName evidence="2">Large ribosomal subunit protein uL29c</fullName>
    </recommendedName>
    <alternativeName>
        <fullName>50S ribosomal protein L29, chloroplastic</fullName>
    </alternativeName>
    <alternativeName>
        <fullName>CL29</fullName>
    </alternativeName>
</protein>
<organism>
    <name type="scientific">Zea mays</name>
    <name type="common">Maize</name>
    <dbReference type="NCBI Taxonomy" id="4577"/>
    <lineage>
        <taxon>Eukaryota</taxon>
        <taxon>Viridiplantae</taxon>
        <taxon>Streptophyta</taxon>
        <taxon>Embryophyta</taxon>
        <taxon>Tracheophyta</taxon>
        <taxon>Spermatophyta</taxon>
        <taxon>Magnoliopsida</taxon>
        <taxon>Liliopsida</taxon>
        <taxon>Poales</taxon>
        <taxon>Poaceae</taxon>
        <taxon>PACMAD clade</taxon>
        <taxon>Panicoideae</taxon>
        <taxon>Andropogonodae</taxon>
        <taxon>Andropogoneae</taxon>
        <taxon>Tripsacinae</taxon>
        <taxon>Zea</taxon>
    </lineage>
</organism>
<keyword id="KW-0150">Chloroplast</keyword>
<keyword id="KW-0934">Plastid</keyword>
<keyword id="KW-1185">Reference proteome</keyword>
<keyword id="KW-0687">Ribonucleoprotein</keyword>
<keyword id="KW-0689">Ribosomal protein</keyword>
<keyword id="KW-0809">Transit peptide</keyword>
<gene>
    <name type="primary">RPL29</name>
</gene>
<comment type="subunit">
    <text>Part of the 50S ribosomal subunit.</text>
</comment>
<comment type="subcellular location">
    <subcellularLocation>
        <location>Plastid</location>
        <location>Chloroplast</location>
    </subcellularLocation>
</comment>
<comment type="developmental stage">
    <text>Present at low levels even in etiolated seedlings, expression increases in both bundle sheath and mesophyll cells upon greening.</text>
</comment>
<comment type="induction">
    <text>By light.</text>
</comment>
<comment type="similarity">
    <text evidence="2">Belongs to the universal ribosomal protein uL29 family.</text>
</comment>
<proteinExistence type="evidence at transcript level"/>
<sequence>MATMSLAAASPLASIPRGIAAQAPCAAFLSIRLGGATATRFAGLAVASQPAERRAAAMVAMAKREQELEEIRAMTTEQMEEEVVDLKGELFLLRLKRSARQEFKNSEFSRMRKRIARMLTVKREREIEQGINKRLSRKLDRKWKQSIVVRPPPSLRGNKEE</sequence>